<accession>A1W1V5</accession>
<dbReference type="EMBL" id="CP000538">
    <property type="protein sequence ID" value="EAQ72756.1"/>
    <property type="molecule type" value="Genomic_DNA"/>
</dbReference>
<dbReference type="RefSeq" id="WP_002855723.1">
    <property type="nucleotide sequence ID" value="NC_008787.1"/>
</dbReference>
<dbReference type="SMR" id="A1W1V5"/>
<dbReference type="KEGG" id="cjj:CJJ81176_1699"/>
<dbReference type="eggNOG" id="COG0091">
    <property type="taxonomic scope" value="Bacteria"/>
</dbReference>
<dbReference type="HOGENOM" id="CLU_083987_3_2_7"/>
<dbReference type="Proteomes" id="UP000000646">
    <property type="component" value="Chromosome"/>
</dbReference>
<dbReference type="GO" id="GO:0022625">
    <property type="term" value="C:cytosolic large ribosomal subunit"/>
    <property type="evidence" value="ECO:0007669"/>
    <property type="project" value="TreeGrafter"/>
</dbReference>
<dbReference type="GO" id="GO:0019843">
    <property type="term" value="F:rRNA binding"/>
    <property type="evidence" value="ECO:0007669"/>
    <property type="project" value="UniProtKB-UniRule"/>
</dbReference>
<dbReference type="GO" id="GO:0003735">
    <property type="term" value="F:structural constituent of ribosome"/>
    <property type="evidence" value="ECO:0007669"/>
    <property type="project" value="InterPro"/>
</dbReference>
<dbReference type="GO" id="GO:0006412">
    <property type="term" value="P:translation"/>
    <property type="evidence" value="ECO:0007669"/>
    <property type="project" value="UniProtKB-UniRule"/>
</dbReference>
<dbReference type="CDD" id="cd00336">
    <property type="entry name" value="Ribosomal_L22"/>
    <property type="match status" value="1"/>
</dbReference>
<dbReference type="Gene3D" id="3.90.470.10">
    <property type="entry name" value="Ribosomal protein L22/L17"/>
    <property type="match status" value="1"/>
</dbReference>
<dbReference type="HAMAP" id="MF_01331_B">
    <property type="entry name" value="Ribosomal_uL22_B"/>
    <property type="match status" value="1"/>
</dbReference>
<dbReference type="InterPro" id="IPR001063">
    <property type="entry name" value="Ribosomal_uL22"/>
</dbReference>
<dbReference type="InterPro" id="IPR005727">
    <property type="entry name" value="Ribosomal_uL22_bac/chlpt-type"/>
</dbReference>
<dbReference type="InterPro" id="IPR047867">
    <property type="entry name" value="Ribosomal_uL22_bac/org-type"/>
</dbReference>
<dbReference type="InterPro" id="IPR018260">
    <property type="entry name" value="Ribosomal_uL22_CS"/>
</dbReference>
<dbReference type="InterPro" id="IPR036394">
    <property type="entry name" value="Ribosomal_uL22_sf"/>
</dbReference>
<dbReference type="NCBIfam" id="TIGR01044">
    <property type="entry name" value="rplV_bact"/>
    <property type="match status" value="1"/>
</dbReference>
<dbReference type="PANTHER" id="PTHR13501">
    <property type="entry name" value="CHLOROPLAST 50S RIBOSOMAL PROTEIN L22-RELATED"/>
    <property type="match status" value="1"/>
</dbReference>
<dbReference type="PANTHER" id="PTHR13501:SF8">
    <property type="entry name" value="LARGE RIBOSOMAL SUBUNIT PROTEIN UL22M"/>
    <property type="match status" value="1"/>
</dbReference>
<dbReference type="Pfam" id="PF00237">
    <property type="entry name" value="Ribosomal_L22"/>
    <property type="match status" value="1"/>
</dbReference>
<dbReference type="SUPFAM" id="SSF54843">
    <property type="entry name" value="Ribosomal protein L22"/>
    <property type="match status" value="1"/>
</dbReference>
<dbReference type="PROSITE" id="PS00464">
    <property type="entry name" value="RIBOSOMAL_L22"/>
    <property type="match status" value="1"/>
</dbReference>
<comment type="function">
    <text evidence="1">This protein binds specifically to 23S rRNA; its binding is stimulated by other ribosomal proteins, e.g. L4, L17, and L20. It is important during the early stages of 50S assembly. It makes multiple contacts with different domains of the 23S rRNA in the assembled 50S subunit and ribosome (By similarity).</text>
</comment>
<comment type="function">
    <text evidence="1">The globular domain of the protein is located near the polypeptide exit tunnel on the outside of the subunit, while an extended beta-hairpin is found that lines the wall of the exit tunnel in the center of the 70S ribosome.</text>
</comment>
<comment type="subunit">
    <text evidence="1">Part of the 50S ribosomal subunit.</text>
</comment>
<comment type="similarity">
    <text evidence="1">Belongs to the universal ribosomal protein uL22 family.</text>
</comment>
<proteinExistence type="inferred from homology"/>
<reference key="1">
    <citation type="submission" date="2006-12" db="EMBL/GenBank/DDBJ databases">
        <authorList>
            <person name="Fouts D.E."/>
            <person name="Nelson K.E."/>
            <person name="Sebastian Y."/>
        </authorList>
    </citation>
    <scope>NUCLEOTIDE SEQUENCE [LARGE SCALE GENOMIC DNA]</scope>
    <source>
        <strain>81-176</strain>
    </source>
</reference>
<protein>
    <recommendedName>
        <fullName evidence="1">Large ribosomal subunit protein uL22</fullName>
    </recommendedName>
    <alternativeName>
        <fullName evidence="3">50S ribosomal protein L22</fullName>
    </alternativeName>
</protein>
<sequence>MSKALIKFIRLSPTKARLIAREVQGMNAELAMASLKFMPNKGAKYIANAISSAVANGGFEANEVVVKSCRVDAAAVLKRFRPRARGSASRIRKPTSHILVEVAKAEVKAEEKKTVAKKAPAAKKTTTTKAPAKKTTSTKKATAKKES</sequence>
<evidence type="ECO:0000255" key="1">
    <source>
        <dbReference type="HAMAP-Rule" id="MF_01331"/>
    </source>
</evidence>
<evidence type="ECO:0000256" key="2">
    <source>
        <dbReference type="SAM" id="MobiDB-lite"/>
    </source>
</evidence>
<evidence type="ECO:0000305" key="3"/>
<name>RL22_CAMJJ</name>
<keyword id="KW-0687">Ribonucleoprotein</keyword>
<keyword id="KW-0689">Ribosomal protein</keyword>
<keyword id="KW-0694">RNA-binding</keyword>
<keyword id="KW-0699">rRNA-binding</keyword>
<organism>
    <name type="scientific">Campylobacter jejuni subsp. jejuni serotype O:23/36 (strain 81-176)</name>
    <dbReference type="NCBI Taxonomy" id="354242"/>
    <lineage>
        <taxon>Bacteria</taxon>
        <taxon>Pseudomonadati</taxon>
        <taxon>Campylobacterota</taxon>
        <taxon>Epsilonproteobacteria</taxon>
        <taxon>Campylobacterales</taxon>
        <taxon>Campylobacteraceae</taxon>
        <taxon>Campylobacter</taxon>
    </lineage>
</organism>
<gene>
    <name evidence="1" type="primary">rplV</name>
    <name type="ordered locus">CJJ81176_1699</name>
</gene>
<feature type="chain" id="PRO_1000052556" description="Large ribosomal subunit protein uL22">
    <location>
        <begin position="1"/>
        <end position="147"/>
    </location>
</feature>
<feature type="region of interest" description="Disordered" evidence="2">
    <location>
        <begin position="110"/>
        <end position="147"/>
    </location>
</feature>
<feature type="compositionally biased region" description="Low complexity" evidence="2">
    <location>
        <begin position="117"/>
        <end position="140"/>
    </location>
</feature>